<proteinExistence type="inferred from homology"/>
<sequence>MTKQIIKGIIIERSSPLKIDELSQAVHLRREIIIEMVEHRLIEPEGSSPTSWKFDNVCLKRAKIAASFYRDLEINMPGIAIALDLLDKIEHLEQRLRTLERFENQE</sequence>
<organism>
    <name type="scientific">Coxiella burnetii (strain CbuK_Q154)</name>
    <name type="common">Coxiella burnetii (strain Q154)</name>
    <dbReference type="NCBI Taxonomy" id="434924"/>
    <lineage>
        <taxon>Bacteria</taxon>
        <taxon>Pseudomonadati</taxon>
        <taxon>Pseudomonadota</taxon>
        <taxon>Gammaproteobacteria</taxon>
        <taxon>Legionellales</taxon>
        <taxon>Coxiellaceae</taxon>
        <taxon>Coxiella</taxon>
    </lineage>
</organism>
<comment type="function">
    <text evidence="1">Interacts with CbpA and inhibits both the DnaJ-like co-chaperone activity and the DNA binding activity of CbpA. Together with CbpA, modulates the activity of the DnaK chaperone system. Does not inhibit the co-chaperone activity of DnaJ.</text>
</comment>
<comment type="similarity">
    <text evidence="1">Belongs to the CbpM family.</text>
</comment>
<gene>
    <name evidence="1" type="primary">cbpM</name>
    <name type="ordered locus">CbuK_0992</name>
</gene>
<feature type="chain" id="PRO_1000137764" description="Chaperone modulatory protein CbpM">
    <location>
        <begin position="1"/>
        <end position="106"/>
    </location>
</feature>
<accession>B6J7F6</accession>
<protein>
    <recommendedName>
        <fullName evidence="1">Chaperone modulatory protein CbpM</fullName>
    </recommendedName>
</protein>
<reference key="1">
    <citation type="journal article" date="2009" name="Infect. Immun.">
        <title>Comparative genomics reveal extensive transposon-mediated genomic plasticity and diversity among potential effector proteins within the genus Coxiella.</title>
        <authorList>
            <person name="Beare P.A."/>
            <person name="Unsworth N."/>
            <person name="Andoh M."/>
            <person name="Voth D.E."/>
            <person name="Omsland A."/>
            <person name="Gilk S.D."/>
            <person name="Williams K.P."/>
            <person name="Sobral B.W."/>
            <person name="Kupko J.J. III"/>
            <person name="Porcella S.F."/>
            <person name="Samuel J.E."/>
            <person name="Heinzen R.A."/>
        </authorList>
    </citation>
    <scope>NUCLEOTIDE SEQUENCE [LARGE SCALE GENOMIC DNA]</scope>
    <source>
        <strain>CbuK_Q154</strain>
    </source>
</reference>
<name>CBPM_COXB1</name>
<dbReference type="EMBL" id="CP001020">
    <property type="protein sequence ID" value="ACJ20205.1"/>
    <property type="molecule type" value="Genomic_DNA"/>
</dbReference>
<dbReference type="RefSeq" id="WP_005768409.1">
    <property type="nucleotide sequence ID" value="NC_011528.1"/>
</dbReference>
<dbReference type="SMR" id="B6J7F6"/>
<dbReference type="KEGG" id="cbc:CbuK_0992"/>
<dbReference type="HOGENOM" id="CLU_144710_3_0_6"/>
<dbReference type="Gene3D" id="1.10.1660.10">
    <property type="match status" value="1"/>
</dbReference>
<dbReference type="HAMAP" id="MF_01155">
    <property type="entry name" value="CbpM"/>
    <property type="match status" value="1"/>
</dbReference>
<dbReference type="InterPro" id="IPR022835">
    <property type="entry name" value="CbpM"/>
</dbReference>
<dbReference type="Pfam" id="PF13591">
    <property type="entry name" value="MerR_2"/>
    <property type="match status" value="1"/>
</dbReference>
<evidence type="ECO:0000255" key="1">
    <source>
        <dbReference type="HAMAP-Rule" id="MF_01155"/>
    </source>
</evidence>